<evidence type="ECO:0000250" key="1"/>
<evidence type="ECO:0000255" key="2"/>
<evidence type="ECO:0000256" key="3">
    <source>
        <dbReference type="SAM" id="MobiDB-lite"/>
    </source>
</evidence>
<evidence type="ECO:0000305" key="4"/>
<feature type="chain" id="PRO_0000299047" description="FGFR1 oncogene partner 2 homolog">
    <location>
        <begin position="1"/>
        <end position="215"/>
    </location>
</feature>
<feature type="region of interest" description="Disordered" evidence="3">
    <location>
        <begin position="193"/>
        <end position="215"/>
    </location>
</feature>
<feature type="coiled-coil region" evidence="2">
    <location>
        <begin position="12"/>
        <end position="186"/>
    </location>
</feature>
<sequence length="215" mass="25287">MSCTIEKVLADAKELVERLREHDGAAESLIEQTTTLNKRVEAMKQYQEEVQELNEIARHRPRSTLVLGIQQENRQIRQLQHENKELRTSLKEHQSALELIMSKYREQMFRLLMASKKDDPGVIMKLKEQHSKELQAHIEKINEMTAVMRRAIEMDEQRGDREHNRIIKLEQENKRLREILQITKISFLNLHKEDASENSPHSAPVPNTDLILRKS</sequence>
<keyword id="KW-0175">Coiled coil</keyword>
<keyword id="KW-0963">Cytoplasm</keyword>
<keyword id="KW-1185">Reference proteome</keyword>
<gene>
    <name type="primary">fgfr1op2</name>
</gene>
<comment type="subcellular location">
    <subcellularLocation>
        <location evidence="1">Cytoplasm</location>
    </subcellularLocation>
</comment>
<comment type="similarity">
    <text evidence="4">Belongs to the SIKE family.</text>
</comment>
<name>FGOP2_XENLA</name>
<protein>
    <recommendedName>
        <fullName>FGFR1 oncogene partner 2 homolog</fullName>
    </recommendedName>
</protein>
<proteinExistence type="evidence at transcript level"/>
<accession>Q8AVR2</accession>
<reference key="1">
    <citation type="submission" date="2002-12" db="EMBL/GenBank/DDBJ databases">
        <authorList>
            <consortium name="NIH - Xenopus Gene Collection (XGC) project"/>
        </authorList>
    </citation>
    <scope>NUCLEOTIDE SEQUENCE [LARGE SCALE MRNA]</scope>
    <source>
        <tissue>Embryo</tissue>
    </source>
</reference>
<dbReference type="EMBL" id="BC041504">
    <property type="protein sequence ID" value="AAH41504.1"/>
    <property type="molecule type" value="mRNA"/>
</dbReference>
<dbReference type="RefSeq" id="NP_001079401.1">
    <property type="nucleotide sequence ID" value="NM_001085932.1"/>
</dbReference>
<dbReference type="RefSeq" id="XP_018109527.1">
    <property type="nucleotide sequence ID" value="XM_018254038.1"/>
</dbReference>
<dbReference type="RefSeq" id="XP_018109528.1">
    <property type="nucleotide sequence ID" value="XM_018254039.1"/>
</dbReference>
<dbReference type="SMR" id="Q8AVR2"/>
<dbReference type="DNASU" id="379088"/>
<dbReference type="GeneID" id="379088"/>
<dbReference type="KEGG" id="xla:379088"/>
<dbReference type="AGR" id="Xenbase:XB-GENE-6251823"/>
<dbReference type="CTD" id="379088"/>
<dbReference type="Xenbase" id="XB-GENE-6251823">
    <property type="gene designation" value="fgfr1op2.S"/>
</dbReference>
<dbReference type="OMA" id="EPNIARH"/>
<dbReference type="OrthoDB" id="21214at2759"/>
<dbReference type="Proteomes" id="UP000186698">
    <property type="component" value="Chromosome 3S"/>
</dbReference>
<dbReference type="Bgee" id="379088">
    <property type="expression patterns" value="Expressed in oocyte and 20 other cell types or tissues"/>
</dbReference>
<dbReference type="GO" id="GO:0005737">
    <property type="term" value="C:cytoplasm"/>
    <property type="evidence" value="ECO:0007669"/>
    <property type="project" value="UniProtKB-SubCell"/>
</dbReference>
<dbReference type="GO" id="GO:0009611">
    <property type="term" value="P:response to wounding"/>
    <property type="evidence" value="ECO:0000318"/>
    <property type="project" value="GO_Central"/>
</dbReference>
<dbReference type="InterPro" id="IPR008555">
    <property type="entry name" value="SIKE"/>
</dbReference>
<dbReference type="PANTHER" id="PTHR12186:SF3">
    <property type="entry name" value="FGFR1 ONCOGENE PARTNER 2"/>
    <property type="match status" value="1"/>
</dbReference>
<dbReference type="PANTHER" id="PTHR12186">
    <property type="entry name" value="SIKE FAMILY MEMBER"/>
    <property type="match status" value="1"/>
</dbReference>
<dbReference type="Pfam" id="PF05769">
    <property type="entry name" value="SIKE"/>
    <property type="match status" value="1"/>
</dbReference>
<organism>
    <name type="scientific">Xenopus laevis</name>
    <name type="common">African clawed frog</name>
    <dbReference type="NCBI Taxonomy" id="8355"/>
    <lineage>
        <taxon>Eukaryota</taxon>
        <taxon>Metazoa</taxon>
        <taxon>Chordata</taxon>
        <taxon>Craniata</taxon>
        <taxon>Vertebrata</taxon>
        <taxon>Euteleostomi</taxon>
        <taxon>Amphibia</taxon>
        <taxon>Batrachia</taxon>
        <taxon>Anura</taxon>
        <taxon>Pipoidea</taxon>
        <taxon>Pipidae</taxon>
        <taxon>Xenopodinae</taxon>
        <taxon>Xenopus</taxon>
        <taxon>Xenopus</taxon>
    </lineage>
</organism>